<keyword id="KW-0143">Chaperone</keyword>
<keyword id="KW-0963">Cytoplasm</keyword>
<keyword id="KW-0533">Nickel</keyword>
<keyword id="KW-1185">Reference proteome</keyword>
<evidence type="ECO:0000255" key="1">
    <source>
        <dbReference type="HAMAP-Rule" id="MF_00822"/>
    </source>
</evidence>
<gene>
    <name evidence="1" type="primary">ureE</name>
    <name type="ordered locus">Sca_1783</name>
</gene>
<name>UREE_STACT</name>
<sequence length="150" mass="17458">MIIEEIVGNVANLSEEEKQKHIEKVYLENSDLVKRIQRVTTDHGNEIGIRLKNPVDLEYGDILYQDDHNMIVVDVNSEDILVIQPRTLKEMGDIAHQLGNRHLPTQFTENEMLVQYDYLVEDLLKSLGIPYTREDRKVNKAFRHIGHSHD</sequence>
<organism>
    <name type="scientific">Staphylococcus carnosus (strain TM300)</name>
    <dbReference type="NCBI Taxonomy" id="396513"/>
    <lineage>
        <taxon>Bacteria</taxon>
        <taxon>Bacillati</taxon>
        <taxon>Bacillota</taxon>
        <taxon>Bacilli</taxon>
        <taxon>Bacillales</taxon>
        <taxon>Staphylococcaceae</taxon>
        <taxon>Staphylococcus</taxon>
    </lineage>
</organism>
<reference key="1">
    <citation type="journal article" date="2009" name="Appl. Environ. Microbiol.">
        <title>Genome analysis of the meat starter culture bacterium Staphylococcus carnosus TM300.</title>
        <authorList>
            <person name="Rosenstein R."/>
            <person name="Nerz C."/>
            <person name="Biswas L."/>
            <person name="Resch A."/>
            <person name="Raddatz G."/>
            <person name="Schuster S.C."/>
            <person name="Goetz F."/>
        </authorList>
    </citation>
    <scope>NUCLEOTIDE SEQUENCE [LARGE SCALE GENOMIC DNA]</scope>
    <source>
        <strain>TM300</strain>
    </source>
</reference>
<protein>
    <recommendedName>
        <fullName evidence="1">Urease accessory protein UreE</fullName>
    </recommendedName>
</protein>
<feature type="chain" id="PRO_1000148718" description="Urease accessory protein UreE">
    <location>
        <begin position="1"/>
        <end position="150"/>
    </location>
</feature>
<proteinExistence type="inferred from homology"/>
<comment type="function">
    <text evidence="1">Involved in urease metallocenter assembly. Binds nickel. Probably functions as a nickel donor during metallocenter assembly.</text>
</comment>
<comment type="subcellular location">
    <subcellularLocation>
        <location evidence="1">Cytoplasm</location>
    </subcellularLocation>
</comment>
<comment type="similarity">
    <text evidence="1">Belongs to the UreE family.</text>
</comment>
<accession>B9DLY1</accession>
<dbReference type="EMBL" id="AM295250">
    <property type="protein sequence ID" value="CAL28688.1"/>
    <property type="molecule type" value="Genomic_DNA"/>
</dbReference>
<dbReference type="RefSeq" id="WP_015901024.1">
    <property type="nucleotide sequence ID" value="NC_012121.1"/>
</dbReference>
<dbReference type="SMR" id="B9DLY1"/>
<dbReference type="GeneID" id="93794241"/>
<dbReference type="KEGG" id="sca:SCA_1783"/>
<dbReference type="eggNOG" id="COG2371">
    <property type="taxonomic scope" value="Bacteria"/>
</dbReference>
<dbReference type="HOGENOM" id="CLU_093757_3_1_9"/>
<dbReference type="OrthoDB" id="9810882at2"/>
<dbReference type="BioCyc" id="SCAR396513:SCA_RS09070-MONOMER"/>
<dbReference type="Proteomes" id="UP000000444">
    <property type="component" value="Chromosome"/>
</dbReference>
<dbReference type="GO" id="GO:0005737">
    <property type="term" value="C:cytoplasm"/>
    <property type="evidence" value="ECO:0007669"/>
    <property type="project" value="UniProtKB-SubCell"/>
</dbReference>
<dbReference type="GO" id="GO:0016151">
    <property type="term" value="F:nickel cation binding"/>
    <property type="evidence" value="ECO:0007669"/>
    <property type="project" value="UniProtKB-UniRule"/>
</dbReference>
<dbReference type="GO" id="GO:0051082">
    <property type="term" value="F:unfolded protein binding"/>
    <property type="evidence" value="ECO:0007669"/>
    <property type="project" value="UniProtKB-UniRule"/>
</dbReference>
<dbReference type="GO" id="GO:0006457">
    <property type="term" value="P:protein folding"/>
    <property type="evidence" value="ECO:0007669"/>
    <property type="project" value="InterPro"/>
</dbReference>
<dbReference type="GO" id="GO:0065003">
    <property type="term" value="P:protein-containing complex assembly"/>
    <property type="evidence" value="ECO:0007669"/>
    <property type="project" value="InterPro"/>
</dbReference>
<dbReference type="GO" id="GO:0019627">
    <property type="term" value="P:urea metabolic process"/>
    <property type="evidence" value="ECO:0007669"/>
    <property type="project" value="InterPro"/>
</dbReference>
<dbReference type="CDD" id="cd00571">
    <property type="entry name" value="UreE"/>
    <property type="match status" value="1"/>
</dbReference>
<dbReference type="Gene3D" id="2.60.260.20">
    <property type="entry name" value="Urease metallochaperone UreE, N-terminal domain"/>
    <property type="match status" value="1"/>
</dbReference>
<dbReference type="Gene3D" id="3.30.70.790">
    <property type="entry name" value="UreE, C-terminal domain"/>
    <property type="match status" value="1"/>
</dbReference>
<dbReference type="HAMAP" id="MF_00822">
    <property type="entry name" value="UreE"/>
    <property type="match status" value="1"/>
</dbReference>
<dbReference type="InterPro" id="IPR012406">
    <property type="entry name" value="UreE"/>
</dbReference>
<dbReference type="InterPro" id="IPR007864">
    <property type="entry name" value="UreE_C_dom"/>
</dbReference>
<dbReference type="InterPro" id="IPR004029">
    <property type="entry name" value="UreE_N"/>
</dbReference>
<dbReference type="InterPro" id="IPR036118">
    <property type="entry name" value="UreE_N_sf"/>
</dbReference>
<dbReference type="NCBIfam" id="NF009755">
    <property type="entry name" value="PRK13261.2-1"/>
    <property type="match status" value="1"/>
</dbReference>
<dbReference type="Pfam" id="PF05194">
    <property type="entry name" value="UreE_C"/>
    <property type="match status" value="1"/>
</dbReference>
<dbReference type="Pfam" id="PF02814">
    <property type="entry name" value="UreE_N"/>
    <property type="match status" value="1"/>
</dbReference>
<dbReference type="PIRSF" id="PIRSF036402">
    <property type="entry name" value="Ureas_acces_UreE"/>
    <property type="match status" value="1"/>
</dbReference>
<dbReference type="SMART" id="SM00988">
    <property type="entry name" value="UreE_N"/>
    <property type="match status" value="1"/>
</dbReference>
<dbReference type="SUPFAM" id="SSF69737">
    <property type="entry name" value="Urease metallochaperone UreE, C-terminal domain"/>
    <property type="match status" value="1"/>
</dbReference>
<dbReference type="SUPFAM" id="SSF69287">
    <property type="entry name" value="Urease metallochaperone UreE, N-terminal domain"/>
    <property type="match status" value="1"/>
</dbReference>